<protein>
    <recommendedName>
        <fullName evidence="1">5-amino-6-(D-ribitylamino)uracil--L-tyrosine 4-hydroxyphenyl transferase</fullName>
        <ecNumber evidence="1">2.5.1.147</ecNumber>
    </recommendedName>
    <alternativeName>
        <fullName evidence="1">FO synthase subunit 2</fullName>
    </alternativeName>
</protein>
<organism>
    <name type="scientific">Trichodesmium erythraeum (strain IMS101)</name>
    <dbReference type="NCBI Taxonomy" id="203124"/>
    <lineage>
        <taxon>Bacteria</taxon>
        <taxon>Bacillati</taxon>
        <taxon>Cyanobacteriota</taxon>
        <taxon>Cyanophyceae</taxon>
        <taxon>Oscillatoriophycideae</taxon>
        <taxon>Oscillatoriales</taxon>
        <taxon>Microcoleaceae</taxon>
        <taxon>Trichodesmium</taxon>
    </lineage>
</organism>
<evidence type="ECO:0000255" key="1">
    <source>
        <dbReference type="HAMAP-Rule" id="MF_01612"/>
    </source>
</evidence>
<evidence type="ECO:0000255" key="2">
    <source>
        <dbReference type="PROSITE-ProRule" id="PRU01266"/>
    </source>
</evidence>
<evidence type="ECO:0000305" key="3"/>
<accession>Q113H3</accession>
<proteinExistence type="inferred from homology"/>
<gene>
    <name evidence="1" type="primary">cofH</name>
    <name type="ordered locus">Tery_2116</name>
</gene>
<reference key="1">
    <citation type="journal article" date="2015" name="Proc. Natl. Acad. Sci. U.S.A.">
        <title>Trichodesmium genome maintains abundant, widespread noncoding DNA in situ, despite oligotrophic lifestyle.</title>
        <authorList>
            <person name="Walworth N."/>
            <person name="Pfreundt U."/>
            <person name="Nelson W.C."/>
            <person name="Mincer T."/>
            <person name="Heidelberg J.F."/>
            <person name="Fu F."/>
            <person name="Waterbury J.B."/>
            <person name="Glavina del Rio T."/>
            <person name="Goodwin L."/>
            <person name="Kyrpides N.C."/>
            <person name="Land M.L."/>
            <person name="Woyke T."/>
            <person name="Hutchins D.A."/>
            <person name="Hess W.R."/>
            <person name="Webb E.A."/>
        </authorList>
    </citation>
    <scope>NUCLEOTIDE SEQUENCE [LARGE SCALE GENOMIC DNA]</scope>
    <source>
        <strain>IMS101</strain>
    </source>
</reference>
<comment type="function">
    <text evidence="1">Catalyzes the radical-mediated synthesis of 5-amino-5-(4-hydroxybenzyl)-6-(D-ribitylimino)-5,6-dihydrouracil from 5-amino-6-(D-ribitylamino)uracil and L-tyrosine.</text>
</comment>
<comment type="catalytic activity">
    <reaction evidence="1">
        <text>5-amino-6-(D-ribitylamino)uracil + L-tyrosine + S-adenosyl-L-methionine = 5-amino-5-(4-hydroxybenzyl)-6-(D-ribitylimino)-5,6-dihydrouracil + 2-iminoacetate + 5'-deoxyadenosine + L-methionine + H(+)</text>
        <dbReference type="Rhea" id="RHEA:55200"/>
        <dbReference type="ChEBI" id="CHEBI:15378"/>
        <dbReference type="ChEBI" id="CHEBI:15934"/>
        <dbReference type="ChEBI" id="CHEBI:17319"/>
        <dbReference type="ChEBI" id="CHEBI:57844"/>
        <dbReference type="ChEBI" id="CHEBI:58315"/>
        <dbReference type="ChEBI" id="CHEBI:59789"/>
        <dbReference type="ChEBI" id="CHEBI:77846"/>
        <dbReference type="ChEBI" id="CHEBI:85936"/>
        <dbReference type="EC" id="2.5.1.147"/>
    </reaction>
</comment>
<comment type="cofactor">
    <cofactor evidence="1">
        <name>[4Fe-4S] cluster</name>
        <dbReference type="ChEBI" id="CHEBI:49883"/>
    </cofactor>
    <text evidence="1">Binds 1 [4Fe-4S] cluster. The cluster is coordinated with 3 cysteines and an exchangeable S-adenosyl-L-methionine.</text>
</comment>
<comment type="pathway">
    <text evidence="1">Cofactor biosynthesis; coenzyme F0 biosynthesis.</text>
</comment>
<comment type="subunit">
    <text evidence="1">Consists of two subunits, CofG and CofH.</text>
</comment>
<comment type="similarity">
    <text evidence="1">Belongs to the radical SAM superfamily. CofH family.</text>
</comment>
<comment type="sequence caution" evidence="3">
    <conflict type="erroneous initiation">
        <sequence resource="EMBL-CDS" id="ABG51351"/>
    </conflict>
</comment>
<keyword id="KW-0004">4Fe-4S</keyword>
<keyword id="KW-0408">Iron</keyword>
<keyword id="KW-0411">Iron-sulfur</keyword>
<keyword id="KW-0479">Metal-binding</keyword>
<keyword id="KW-0949">S-adenosyl-L-methionine</keyword>
<keyword id="KW-0808">Transferase</keyword>
<feature type="chain" id="PRO_0000335563" description="5-amino-6-(D-ribitylamino)uracil--L-tyrosine 4-hydroxyphenyl transferase">
    <location>
        <begin position="1"/>
        <end position="393"/>
    </location>
</feature>
<feature type="domain" description="Radical SAM core" evidence="2">
    <location>
        <begin position="71"/>
        <end position="318"/>
    </location>
</feature>
<feature type="binding site" evidence="1">
    <location>
        <position position="85"/>
    </location>
    <ligand>
        <name>[4Fe-4S] cluster</name>
        <dbReference type="ChEBI" id="CHEBI:49883"/>
        <note>4Fe-4S-S-AdoMet</note>
    </ligand>
</feature>
<feature type="binding site" evidence="1">
    <location>
        <position position="89"/>
    </location>
    <ligand>
        <name>[4Fe-4S] cluster</name>
        <dbReference type="ChEBI" id="CHEBI:49883"/>
        <note>4Fe-4S-S-AdoMet</note>
    </ligand>
</feature>
<feature type="binding site" evidence="1">
    <location>
        <position position="92"/>
    </location>
    <ligand>
        <name>[4Fe-4S] cluster</name>
        <dbReference type="ChEBI" id="CHEBI:49883"/>
        <note>4Fe-4S-S-AdoMet</note>
    </ligand>
</feature>
<sequence>MTNQNLETNLETILNRALQGYDLSPAETLLLLSPTTKPNLGKLALTELPAEITAIQKTADQLRQQQVGDTVTYVINRNINFTNICEQHCSFCAFRRDDGKTGAFWLDINQILAKANDAVQRGATEICMQGGLNLQAKVAGKSLPYYLQLVREIKNEFSHLHLHAFSPQEVQFIAREDGVSYEYVIAALRDAGVHSMPGTAAEVLDDAVRRIICPEKIDTGTWLEIVGTAHRLGMPTTSTMLCGHIETPKQQILHLERLRSLQQTAIEKDYPARITEFILLPFVGQEAPAPLRRRVGHDQPILLDVLLLTAVSRIFLGNWIINHQPSWVKIGLDGAKEALKWGCNDIGGTLMEEHITTMAGAIGGTFMEVKNLQEAITSLGRNYQQRDTLYKYL</sequence>
<name>COFH_TRIEI</name>
<dbReference type="EC" id="2.5.1.147" evidence="1"/>
<dbReference type="EMBL" id="CP000393">
    <property type="protein sequence ID" value="ABG51351.1"/>
    <property type="status" value="ALT_INIT"/>
    <property type="molecule type" value="Genomic_DNA"/>
</dbReference>
<dbReference type="SMR" id="Q113H3"/>
<dbReference type="STRING" id="203124.Tery_2116"/>
<dbReference type="KEGG" id="ter:Tery_2116"/>
<dbReference type="eggNOG" id="COG1060">
    <property type="taxonomic scope" value="Bacteria"/>
</dbReference>
<dbReference type="HOGENOM" id="CLU_040406_1_0_3"/>
<dbReference type="UniPathway" id="UPA00072"/>
<dbReference type="GO" id="GO:0051539">
    <property type="term" value="F:4 iron, 4 sulfur cluster binding"/>
    <property type="evidence" value="ECO:0007669"/>
    <property type="project" value="UniProtKB-KW"/>
</dbReference>
<dbReference type="GO" id="GO:0141093">
    <property type="term" value="F:5-amino-6-(D-ribitylamino)uracil--L-tyrosine 4-hydroxyphenyl transferase activity"/>
    <property type="evidence" value="ECO:0007669"/>
    <property type="project" value="UniProtKB-EC"/>
</dbReference>
<dbReference type="GO" id="GO:0044689">
    <property type="term" value="F:7,8-didemethyl-8-hydroxy-5-deazariboflavin synthase activity"/>
    <property type="evidence" value="ECO:0007669"/>
    <property type="project" value="TreeGrafter"/>
</dbReference>
<dbReference type="GO" id="GO:0005506">
    <property type="term" value="F:iron ion binding"/>
    <property type="evidence" value="ECO:0007669"/>
    <property type="project" value="UniProtKB-UniRule"/>
</dbReference>
<dbReference type="CDD" id="cd01335">
    <property type="entry name" value="Radical_SAM"/>
    <property type="match status" value="1"/>
</dbReference>
<dbReference type="Gene3D" id="3.20.20.70">
    <property type="entry name" value="Aldolase class I"/>
    <property type="match status" value="1"/>
</dbReference>
<dbReference type="HAMAP" id="MF_01612">
    <property type="entry name" value="FO_synth_sub2"/>
    <property type="match status" value="1"/>
</dbReference>
<dbReference type="InterPro" id="IPR013785">
    <property type="entry name" value="Aldolase_TIM"/>
</dbReference>
<dbReference type="InterPro" id="IPR045567">
    <property type="entry name" value="CofH/MnqC-like_C"/>
</dbReference>
<dbReference type="InterPro" id="IPR019940">
    <property type="entry name" value="CofH_family"/>
</dbReference>
<dbReference type="InterPro" id="IPR034405">
    <property type="entry name" value="F420"/>
</dbReference>
<dbReference type="InterPro" id="IPR020050">
    <property type="entry name" value="FO_synthase_su2"/>
</dbReference>
<dbReference type="InterPro" id="IPR007197">
    <property type="entry name" value="rSAM"/>
</dbReference>
<dbReference type="NCBIfam" id="TIGR00423">
    <property type="entry name" value="CofH family radical SAM protein"/>
    <property type="match status" value="1"/>
</dbReference>
<dbReference type="NCBIfam" id="TIGR03551">
    <property type="entry name" value="F420_cofH"/>
    <property type="match status" value="1"/>
</dbReference>
<dbReference type="NCBIfam" id="NF005609">
    <property type="entry name" value="PRK07360.1"/>
    <property type="match status" value="1"/>
</dbReference>
<dbReference type="PANTHER" id="PTHR43076">
    <property type="entry name" value="FO SYNTHASE (COFH)"/>
    <property type="match status" value="1"/>
</dbReference>
<dbReference type="PANTHER" id="PTHR43076:SF1">
    <property type="entry name" value="LIPOYL SYNTHASE 2"/>
    <property type="match status" value="1"/>
</dbReference>
<dbReference type="Pfam" id="PF19288">
    <property type="entry name" value="CofH_C"/>
    <property type="match status" value="1"/>
</dbReference>
<dbReference type="Pfam" id="PF04055">
    <property type="entry name" value="Radical_SAM"/>
    <property type="match status" value="1"/>
</dbReference>
<dbReference type="PIRSF" id="PIRSF004762">
    <property type="entry name" value="CHP00423"/>
    <property type="match status" value="1"/>
</dbReference>
<dbReference type="SFLD" id="SFLDF00293">
    <property type="entry name" value="((2_3_4_5-tetrahydroxypentyl)a"/>
    <property type="match status" value="1"/>
</dbReference>
<dbReference type="SFLD" id="SFLDG01388">
    <property type="entry name" value="7_8-didemethyl-8-hydroxy-5-dea"/>
    <property type="match status" value="1"/>
</dbReference>
<dbReference type="SFLD" id="SFLDG01389">
    <property type="entry name" value="menaquinone_synthsis_involved"/>
    <property type="match status" value="1"/>
</dbReference>
<dbReference type="SUPFAM" id="SSF102114">
    <property type="entry name" value="Radical SAM enzymes"/>
    <property type="match status" value="1"/>
</dbReference>
<dbReference type="PROSITE" id="PS51918">
    <property type="entry name" value="RADICAL_SAM"/>
    <property type="match status" value="1"/>
</dbReference>